<organism>
    <name type="scientific">Pongo abelii</name>
    <name type="common">Sumatran orangutan</name>
    <name type="synonym">Pongo pygmaeus abelii</name>
    <dbReference type="NCBI Taxonomy" id="9601"/>
    <lineage>
        <taxon>Eukaryota</taxon>
        <taxon>Metazoa</taxon>
        <taxon>Chordata</taxon>
        <taxon>Craniata</taxon>
        <taxon>Vertebrata</taxon>
        <taxon>Euteleostomi</taxon>
        <taxon>Mammalia</taxon>
        <taxon>Eutheria</taxon>
        <taxon>Euarchontoglires</taxon>
        <taxon>Primates</taxon>
        <taxon>Haplorrhini</taxon>
        <taxon>Catarrhini</taxon>
        <taxon>Hominidae</taxon>
        <taxon>Pongo</taxon>
    </lineage>
</organism>
<proteinExistence type="evidence at transcript level"/>
<comment type="function">
    <text evidence="1">May be involved in protein trafficking from the plasma membrane to the early endosome (EE) as well as in homotypic fusion of endocytic organelles. Mediates the endocytic trafficking from early endosomes to late endosomes and lysosomes (By similarity).</text>
</comment>
<comment type="subunit">
    <text evidence="1 3">Forms a SNARE complex with VTI1B, STX8 and VAMP8 which functions in the homotypic fusion of late endosomes. Component of the SNARE complex composed of STX7, STX8, VAMP7 and VTI1B that is required for heterotypic fusion of late endosomes with lysosomes. Interacts with VPS11, VPS16 and VPS18. Interacts with VPS33A (By similarity). Interacts with TPC1 (By similarity).</text>
</comment>
<comment type="subcellular location">
    <subcellularLocation>
        <location evidence="1">Early endosome membrane</location>
        <topology evidence="1">Single-pass type IV membrane protein</topology>
    </subcellularLocation>
</comment>
<comment type="similarity">
    <text evidence="7">Belongs to the syntaxin family.</text>
</comment>
<dbReference type="EMBL" id="CR860698">
    <property type="protein sequence ID" value="CAH92814.1"/>
    <property type="molecule type" value="mRNA"/>
</dbReference>
<dbReference type="RefSeq" id="NP_001127590.1">
    <property type="nucleotide sequence ID" value="NM_001134118.1"/>
</dbReference>
<dbReference type="SMR" id="Q5R602"/>
<dbReference type="FunCoup" id="Q5R602">
    <property type="interactions" value="2087"/>
</dbReference>
<dbReference type="STRING" id="9601.ENSPPYP00000019051"/>
<dbReference type="GeneID" id="100174669"/>
<dbReference type="KEGG" id="pon:100174669"/>
<dbReference type="CTD" id="8417"/>
<dbReference type="eggNOG" id="KOG0811">
    <property type="taxonomic scope" value="Eukaryota"/>
</dbReference>
<dbReference type="InParanoid" id="Q5R602"/>
<dbReference type="OrthoDB" id="364348at2759"/>
<dbReference type="Proteomes" id="UP000001595">
    <property type="component" value="Unplaced"/>
</dbReference>
<dbReference type="GO" id="GO:0031901">
    <property type="term" value="C:early endosome membrane"/>
    <property type="evidence" value="ECO:0007669"/>
    <property type="project" value="UniProtKB-SubCell"/>
</dbReference>
<dbReference type="GO" id="GO:0031201">
    <property type="term" value="C:SNARE complex"/>
    <property type="evidence" value="ECO:0007669"/>
    <property type="project" value="TreeGrafter"/>
</dbReference>
<dbReference type="GO" id="GO:0008021">
    <property type="term" value="C:synaptic vesicle"/>
    <property type="evidence" value="ECO:0007669"/>
    <property type="project" value="TreeGrafter"/>
</dbReference>
<dbReference type="GO" id="GO:0005484">
    <property type="term" value="F:SNAP receptor activity"/>
    <property type="evidence" value="ECO:0007669"/>
    <property type="project" value="InterPro"/>
</dbReference>
<dbReference type="GO" id="GO:0000149">
    <property type="term" value="F:SNARE binding"/>
    <property type="evidence" value="ECO:0007669"/>
    <property type="project" value="TreeGrafter"/>
</dbReference>
<dbReference type="GO" id="GO:0006886">
    <property type="term" value="P:intracellular protein transport"/>
    <property type="evidence" value="ECO:0007669"/>
    <property type="project" value="InterPro"/>
</dbReference>
<dbReference type="GO" id="GO:0048278">
    <property type="term" value="P:vesicle docking"/>
    <property type="evidence" value="ECO:0007669"/>
    <property type="project" value="TreeGrafter"/>
</dbReference>
<dbReference type="GO" id="GO:0006906">
    <property type="term" value="P:vesicle fusion"/>
    <property type="evidence" value="ECO:0007669"/>
    <property type="project" value="TreeGrafter"/>
</dbReference>
<dbReference type="CDD" id="cd15875">
    <property type="entry name" value="SNARE_syntaxin7"/>
    <property type="match status" value="1"/>
</dbReference>
<dbReference type="CDD" id="cd00179">
    <property type="entry name" value="SynN"/>
    <property type="match status" value="1"/>
</dbReference>
<dbReference type="FunFam" id="1.20.5.110:FF:000016">
    <property type="entry name" value="Syntaxin 12"/>
    <property type="match status" value="1"/>
</dbReference>
<dbReference type="FunFam" id="1.20.58.70:FF:000006">
    <property type="entry name" value="Syntaxin 7"/>
    <property type="match status" value="1"/>
</dbReference>
<dbReference type="Gene3D" id="1.20.5.110">
    <property type="match status" value="1"/>
</dbReference>
<dbReference type="Gene3D" id="1.20.58.70">
    <property type="match status" value="1"/>
</dbReference>
<dbReference type="InterPro" id="IPR010989">
    <property type="entry name" value="SNARE"/>
</dbReference>
<dbReference type="InterPro" id="IPR045242">
    <property type="entry name" value="Syntaxin"/>
</dbReference>
<dbReference type="InterPro" id="IPR006012">
    <property type="entry name" value="Syntaxin/epimorphin_CS"/>
</dbReference>
<dbReference type="InterPro" id="IPR006011">
    <property type="entry name" value="Syntaxin_N"/>
</dbReference>
<dbReference type="InterPro" id="IPR000727">
    <property type="entry name" value="T_SNARE_dom"/>
</dbReference>
<dbReference type="PANTHER" id="PTHR19957">
    <property type="entry name" value="SYNTAXIN"/>
    <property type="match status" value="1"/>
</dbReference>
<dbReference type="PANTHER" id="PTHR19957:SF90">
    <property type="entry name" value="SYNTAXIN-7"/>
    <property type="match status" value="1"/>
</dbReference>
<dbReference type="Pfam" id="PF05739">
    <property type="entry name" value="SNARE"/>
    <property type="match status" value="1"/>
</dbReference>
<dbReference type="Pfam" id="PF14523">
    <property type="entry name" value="Syntaxin_2"/>
    <property type="match status" value="1"/>
</dbReference>
<dbReference type="SMART" id="SM00503">
    <property type="entry name" value="SynN"/>
    <property type="match status" value="1"/>
</dbReference>
<dbReference type="SMART" id="SM00397">
    <property type="entry name" value="t_SNARE"/>
    <property type="match status" value="1"/>
</dbReference>
<dbReference type="SUPFAM" id="SSF47661">
    <property type="entry name" value="t-snare proteins"/>
    <property type="match status" value="1"/>
</dbReference>
<dbReference type="PROSITE" id="PS00914">
    <property type="entry name" value="SYNTAXIN"/>
    <property type="match status" value="1"/>
</dbReference>
<dbReference type="PROSITE" id="PS50192">
    <property type="entry name" value="T_SNARE"/>
    <property type="match status" value="1"/>
</dbReference>
<keyword id="KW-0007">Acetylation</keyword>
<keyword id="KW-0175">Coiled coil</keyword>
<keyword id="KW-0967">Endosome</keyword>
<keyword id="KW-0472">Membrane</keyword>
<keyword id="KW-0597">Phosphoprotein</keyword>
<keyword id="KW-1185">Reference proteome</keyword>
<keyword id="KW-0812">Transmembrane</keyword>
<keyword id="KW-1133">Transmembrane helix</keyword>
<gene>
    <name type="primary">STX7</name>
</gene>
<accession>Q5R602</accession>
<evidence type="ECO:0000250" key="1"/>
<evidence type="ECO:0000250" key="2">
    <source>
        <dbReference type="UniProtKB" id="O15400"/>
    </source>
</evidence>
<evidence type="ECO:0000250" key="3">
    <source>
        <dbReference type="UniProtKB" id="O70439"/>
    </source>
</evidence>
<evidence type="ECO:0000255" key="4"/>
<evidence type="ECO:0000255" key="5">
    <source>
        <dbReference type="PROSITE-ProRule" id="PRU00202"/>
    </source>
</evidence>
<evidence type="ECO:0000256" key="6">
    <source>
        <dbReference type="SAM" id="MobiDB-lite"/>
    </source>
</evidence>
<evidence type="ECO:0000305" key="7"/>
<reference key="1">
    <citation type="submission" date="2004-11" db="EMBL/GenBank/DDBJ databases">
        <authorList>
            <consortium name="The German cDNA consortium"/>
        </authorList>
    </citation>
    <scope>NUCLEOTIDE SEQUENCE [LARGE SCALE MRNA]</scope>
    <source>
        <tissue>Brain cortex</tissue>
    </source>
</reference>
<name>STX7_PONAB</name>
<protein>
    <recommendedName>
        <fullName>Syntaxin-7</fullName>
    </recommendedName>
</protein>
<feature type="initiator methionine" description="Removed" evidence="2">
    <location>
        <position position="1"/>
    </location>
</feature>
<feature type="chain" id="PRO_0000210215" description="Syntaxin-7">
    <location>
        <begin position="2"/>
        <end position="261"/>
    </location>
</feature>
<feature type="topological domain" description="Cytoplasmic" evidence="4">
    <location>
        <begin position="2"/>
        <end position="238"/>
    </location>
</feature>
<feature type="transmembrane region" description="Helical; Anchor for type IV membrane protein" evidence="4">
    <location>
        <begin position="239"/>
        <end position="259"/>
    </location>
</feature>
<feature type="topological domain" description="Vesicular" evidence="4">
    <location>
        <begin position="260"/>
        <end position="261"/>
    </location>
</feature>
<feature type="domain" description="t-SNARE coiled-coil homology" evidence="5">
    <location>
        <begin position="165"/>
        <end position="227"/>
    </location>
</feature>
<feature type="region of interest" description="Disordered" evidence="6">
    <location>
        <begin position="129"/>
        <end position="148"/>
    </location>
</feature>
<feature type="coiled-coil region" evidence="4">
    <location>
        <begin position="47"/>
        <end position="69"/>
    </location>
</feature>
<feature type="modified residue" description="N-acetylserine" evidence="2">
    <location>
        <position position="2"/>
    </location>
</feature>
<feature type="modified residue" description="Phosphothreonine" evidence="2">
    <location>
        <position position="4"/>
    </location>
</feature>
<feature type="modified residue" description="Phosphoserine" evidence="2">
    <location>
        <position position="45"/>
    </location>
</feature>
<feature type="modified residue" description="Phosphoserine" evidence="2">
    <location>
        <position position="75"/>
    </location>
</feature>
<feature type="modified residue" description="Phosphothreonine" evidence="3">
    <location>
        <position position="79"/>
    </location>
</feature>
<feature type="modified residue" description="Phosphoserine" evidence="3">
    <location>
        <position position="125"/>
    </location>
</feature>
<feature type="modified residue" description="Phosphoserine" evidence="2">
    <location>
        <position position="126"/>
    </location>
</feature>
<feature type="modified residue" description="Phosphoserine" evidence="2">
    <location>
        <position position="129"/>
    </location>
</feature>
<feature type="modified residue" description="Phosphoserine" evidence="2">
    <location>
        <position position="205"/>
    </location>
</feature>
<sequence length="261" mass="29821">MSYTPGVGGDPAQLAQRISSNIQKITQCSAEIQRTLNQLGTPQDSPELRQQLQQKQQYTNQLTKETDKYIKEFGSLPTTPSEQRQRKIQKDRLVGEFTTSLTNFQKVQRQAAEREKEFVARVRASSRVSGSFPEDSSKERNLVSWESQTQPQVQVQDEEITEDDLRLIHERESSIRQLEADIMDINEIFKDLGMMIHEQGDVIDSIEANVENAEVHVQQANQQLSRAADYQRKSRKTLCIIILILVIGVVIIGLIIWGLNR</sequence>